<comment type="function">
    <text evidence="2">Component of the ubiquinol-cytochrome c reductase complex (complex III or cytochrome b-c1 complex) that is part of the mitochondrial respiratory chain. The b-c1 complex mediates electron transfer from ubiquinol to cytochrome c. Contributes to the generation of a proton gradient across the mitochondrial membrane that is then used for ATP synthesis.</text>
</comment>
<comment type="cofactor">
    <cofactor evidence="2">
        <name>heme b</name>
        <dbReference type="ChEBI" id="CHEBI:60344"/>
    </cofactor>
    <text evidence="2">Binds 2 heme b groups non-covalently.</text>
</comment>
<comment type="subunit">
    <text evidence="2">The cytochrome bc1 complex contains 11 subunits: 3 respiratory subunits (MT-CYB, CYC1 and UQCRFS1), 2 core proteins (UQCRC1 and UQCRC2) and 6 low-molecular weight proteins (UQCRH/QCR6, UQCRB/QCR7, UQCRQ/QCR8, UQCR10/QCR9, UQCR11/QCR10 and a cleavage product of UQCRFS1). This cytochrome bc1 complex then forms a dimer.</text>
</comment>
<comment type="subcellular location">
    <subcellularLocation>
        <location evidence="2">Mitochondrion inner membrane</location>
        <topology evidence="2">Multi-pass membrane protein</topology>
    </subcellularLocation>
</comment>
<comment type="miscellaneous">
    <text evidence="1">Heme 1 (or BL or b562) is low-potential and absorbs at about 562 nm, and heme 2 (or BH or b566) is high-potential and absorbs at about 566 nm.</text>
</comment>
<comment type="similarity">
    <text evidence="3 4">Belongs to the cytochrome b family.</text>
</comment>
<comment type="caution">
    <text evidence="2">The full-length protein contains only eight transmembrane helices, not nine as predicted by bioinformatics tools.</text>
</comment>
<geneLocation type="mitochondrion"/>
<reference key="1">
    <citation type="journal article" date="2003" name="J. Mammal. Evol.">
        <title>Phylogeny and evolutionary history of the ground squirrels (Rodentia: Marmotinae).</title>
        <authorList>
            <person name="Harrison R.G."/>
            <person name="Bogdanowicz S.M."/>
            <person name="Hoffmann R.S."/>
            <person name="Yensen E."/>
            <person name="Sherman P.W."/>
        </authorList>
    </citation>
    <scope>NUCLEOTIDE SEQUENCE [GENOMIC DNA]</scope>
    <source>
        <strain>Isolate S38</strain>
        <strain>Isolate S41</strain>
    </source>
</reference>
<sequence>MTNTRKTHPLIKIINHSFIDLPAPSNISAWWNFGSLLGLCLAIQILTGLFLAMHYTSDTTTAFSSVTHICRDVNYGWLIRYMHANGASMFFICLFLHVGRGLYYGSYTYFETWNIGVVLLFVVMATAFMGYVLPWGQMSFWGATVITNLLSAIPYIGTTLVEWIWGGFSVDKATLTRFFAFHFVLPFIVAALVMVHLLFLHETGSNNPSGLISDSDKIPFHPYYTIKDXLGVLLLIMALMILVLFSPDLLGDPDNYTPANPLNTPPHIKPEWYFLFAYAILRSIPNKLGGVLALVFSILILMLFPLLHVSKQRSMMFRPLSQCVFWFLVADLLTLTWIGGQPVEHPFIIIGQLASMLYFTIMLLMLPTVSLIENKLLKW</sequence>
<keyword id="KW-0249">Electron transport</keyword>
<keyword id="KW-0349">Heme</keyword>
<keyword id="KW-0408">Iron</keyword>
<keyword id="KW-0472">Membrane</keyword>
<keyword id="KW-0479">Metal-binding</keyword>
<keyword id="KW-0496">Mitochondrion</keyword>
<keyword id="KW-0999">Mitochondrion inner membrane</keyword>
<keyword id="KW-0679">Respiratory chain</keyword>
<keyword id="KW-0812">Transmembrane</keyword>
<keyword id="KW-1133">Transmembrane helix</keyword>
<keyword id="KW-0813">Transport</keyword>
<keyword id="KW-0830">Ubiquinone</keyword>
<dbReference type="EMBL" id="AF157890">
    <property type="protein sequence ID" value="AAD50174.1"/>
    <property type="molecule type" value="Genomic_DNA"/>
</dbReference>
<dbReference type="EMBL" id="AF157892">
    <property type="protein sequence ID" value="AAD50176.1"/>
    <property type="molecule type" value="Genomic_DNA"/>
</dbReference>
<dbReference type="RefSeq" id="YP_009128502.1">
    <property type="nucleotide sequence ID" value="NC_026706.1"/>
</dbReference>
<dbReference type="GeneID" id="23764701"/>
<dbReference type="CTD" id="4519"/>
<dbReference type="GO" id="GO:0005743">
    <property type="term" value="C:mitochondrial inner membrane"/>
    <property type="evidence" value="ECO:0007669"/>
    <property type="project" value="UniProtKB-SubCell"/>
</dbReference>
<dbReference type="GO" id="GO:0045275">
    <property type="term" value="C:respiratory chain complex III"/>
    <property type="evidence" value="ECO:0007669"/>
    <property type="project" value="InterPro"/>
</dbReference>
<dbReference type="GO" id="GO:0046872">
    <property type="term" value="F:metal ion binding"/>
    <property type="evidence" value="ECO:0007669"/>
    <property type="project" value="UniProtKB-KW"/>
</dbReference>
<dbReference type="GO" id="GO:0008121">
    <property type="term" value="F:ubiquinol-cytochrome-c reductase activity"/>
    <property type="evidence" value="ECO:0007669"/>
    <property type="project" value="InterPro"/>
</dbReference>
<dbReference type="GO" id="GO:0006122">
    <property type="term" value="P:mitochondrial electron transport, ubiquinol to cytochrome c"/>
    <property type="evidence" value="ECO:0007669"/>
    <property type="project" value="TreeGrafter"/>
</dbReference>
<dbReference type="CDD" id="cd00290">
    <property type="entry name" value="cytochrome_b_C"/>
    <property type="match status" value="1"/>
</dbReference>
<dbReference type="CDD" id="cd00284">
    <property type="entry name" value="Cytochrome_b_N"/>
    <property type="match status" value="1"/>
</dbReference>
<dbReference type="FunFam" id="1.20.810.10:FF:000002">
    <property type="entry name" value="Cytochrome b"/>
    <property type="match status" value="1"/>
</dbReference>
<dbReference type="Gene3D" id="1.20.810.10">
    <property type="entry name" value="Cytochrome Bc1 Complex, Chain C"/>
    <property type="match status" value="1"/>
</dbReference>
<dbReference type="InterPro" id="IPR005798">
    <property type="entry name" value="Cyt_b/b6_C"/>
</dbReference>
<dbReference type="InterPro" id="IPR036150">
    <property type="entry name" value="Cyt_b/b6_C_sf"/>
</dbReference>
<dbReference type="InterPro" id="IPR005797">
    <property type="entry name" value="Cyt_b/b6_N"/>
</dbReference>
<dbReference type="InterPro" id="IPR027387">
    <property type="entry name" value="Cytb/b6-like_sf"/>
</dbReference>
<dbReference type="InterPro" id="IPR030689">
    <property type="entry name" value="Cytochrome_b"/>
</dbReference>
<dbReference type="InterPro" id="IPR048260">
    <property type="entry name" value="Cytochrome_b_C_euk/bac"/>
</dbReference>
<dbReference type="InterPro" id="IPR048259">
    <property type="entry name" value="Cytochrome_b_N_euk/bac"/>
</dbReference>
<dbReference type="InterPro" id="IPR016174">
    <property type="entry name" value="Di-haem_cyt_TM"/>
</dbReference>
<dbReference type="PANTHER" id="PTHR19271">
    <property type="entry name" value="CYTOCHROME B"/>
    <property type="match status" value="1"/>
</dbReference>
<dbReference type="PANTHER" id="PTHR19271:SF16">
    <property type="entry name" value="CYTOCHROME B"/>
    <property type="match status" value="1"/>
</dbReference>
<dbReference type="Pfam" id="PF00032">
    <property type="entry name" value="Cytochrom_B_C"/>
    <property type="match status" value="1"/>
</dbReference>
<dbReference type="Pfam" id="PF00033">
    <property type="entry name" value="Cytochrome_B"/>
    <property type="match status" value="1"/>
</dbReference>
<dbReference type="PIRSF" id="PIRSF038885">
    <property type="entry name" value="COB"/>
    <property type="match status" value="1"/>
</dbReference>
<dbReference type="SUPFAM" id="SSF81648">
    <property type="entry name" value="a domain/subunit of cytochrome bc1 complex (Ubiquinol-cytochrome c reductase)"/>
    <property type="match status" value="1"/>
</dbReference>
<dbReference type="SUPFAM" id="SSF81342">
    <property type="entry name" value="Transmembrane di-heme cytochromes"/>
    <property type="match status" value="1"/>
</dbReference>
<dbReference type="PROSITE" id="PS51003">
    <property type="entry name" value="CYTB_CTER"/>
    <property type="match status" value="1"/>
</dbReference>
<dbReference type="PROSITE" id="PS51002">
    <property type="entry name" value="CYTB_NTER"/>
    <property type="match status" value="1"/>
</dbReference>
<protein>
    <recommendedName>
        <fullName>Cytochrome b</fullName>
    </recommendedName>
    <alternativeName>
        <fullName>Complex III subunit 3</fullName>
    </alternativeName>
    <alternativeName>
        <fullName>Complex III subunit III</fullName>
    </alternativeName>
    <alternativeName>
        <fullName>Cytochrome b-c1 complex subunit 3</fullName>
    </alternativeName>
    <alternativeName>
        <fullName>Ubiquinol-cytochrome-c reductase complex cytochrome b subunit</fullName>
    </alternativeName>
</protein>
<feature type="chain" id="PRO_0000257889" description="Cytochrome b">
    <location>
        <begin position="1"/>
        <end position="379"/>
    </location>
</feature>
<feature type="transmembrane region" description="Helical" evidence="2">
    <location>
        <begin position="33"/>
        <end position="53"/>
    </location>
</feature>
<feature type="transmembrane region" description="Helical" evidence="2">
    <location>
        <begin position="77"/>
        <end position="98"/>
    </location>
</feature>
<feature type="transmembrane region" description="Helical" evidence="2">
    <location>
        <begin position="113"/>
        <end position="133"/>
    </location>
</feature>
<feature type="transmembrane region" description="Helical" evidence="2">
    <location>
        <begin position="178"/>
        <end position="198"/>
    </location>
</feature>
<feature type="transmembrane region" description="Helical" evidence="2">
    <location>
        <begin position="226"/>
        <end position="246"/>
    </location>
</feature>
<feature type="transmembrane region" description="Helical" evidence="2">
    <location>
        <begin position="288"/>
        <end position="308"/>
    </location>
</feature>
<feature type="transmembrane region" description="Helical" evidence="2">
    <location>
        <begin position="320"/>
        <end position="340"/>
    </location>
</feature>
<feature type="transmembrane region" description="Helical" evidence="2">
    <location>
        <begin position="347"/>
        <end position="367"/>
    </location>
</feature>
<feature type="binding site" description="axial binding residue" evidence="2">
    <location>
        <position position="83"/>
    </location>
    <ligand>
        <name>heme b</name>
        <dbReference type="ChEBI" id="CHEBI:60344"/>
        <label>b562</label>
    </ligand>
    <ligandPart>
        <name>Fe</name>
        <dbReference type="ChEBI" id="CHEBI:18248"/>
    </ligandPart>
</feature>
<feature type="binding site" description="axial binding residue" evidence="2">
    <location>
        <position position="97"/>
    </location>
    <ligand>
        <name>heme b</name>
        <dbReference type="ChEBI" id="CHEBI:60344"/>
        <label>b566</label>
    </ligand>
    <ligandPart>
        <name>Fe</name>
        <dbReference type="ChEBI" id="CHEBI:18248"/>
    </ligandPart>
</feature>
<feature type="binding site" description="axial binding residue" evidence="2">
    <location>
        <position position="182"/>
    </location>
    <ligand>
        <name>heme b</name>
        <dbReference type="ChEBI" id="CHEBI:60344"/>
        <label>b562</label>
    </ligand>
    <ligandPart>
        <name>Fe</name>
        <dbReference type="ChEBI" id="CHEBI:18248"/>
    </ligandPart>
</feature>
<feature type="binding site" description="axial binding residue" evidence="2">
    <location>
        <position position="196"/>
    </location>
    <ligand>
        <name>heme b</name>
        <dbReference type="ChEBI" id="CHEBI:60344"/>
        <label>b566</label>
    </ligand>
    <ligandPart>
        <name>Fe</name>
        <dbReference type="ChEBI" id="CHEBI:18248"/>
    </ligandPart>
</feature>
<feature type="binding site" evidence="2">
    <location>
        <position position="201"/>
    </location>
    <ligand>
        <name>a ubiquinone</name>
        <dbReference type="ChEBI" id="CHEBI:16389"/>
    </ligand>
</feature>
<feature type="sequence variant" description="In strain: Isolate S41.">
    <original>T</original>
    <variation>M</variation>
    <location>
        <position position="257"/>
    </location>
</feature>
<feature type="sequence variant" description="In strain: Isolate S41.">
    <original>M</original>
    <variation>I</variation>
    <location>
        <position position="362"/>
    </location>
</feature>
<gene>
    <name type="primary">MT-CYB</name>
    <name type="synonym">COB</name>
    <name type="synonym">CYTB</name>
    <name type="synonym">MTCYB</name>
</gene>
<accession>Q9TF61</accession>
<accession>Q9TF59</accession>
<evidence type="ECO:0000250" key="1"/>
<evidence type="ECO:0000250" key="2">
    <source>
        <dbReference type="UniProtKB" id="P00157"/>
    </source>
</evidence>
<evidence type="ECO:0000255" key="3">
    <source>
        <dbReference type="PROSITE-ProRule" id="PRU00967"/>
    </source>
</evidence>
<evidence type="ECO:0000255" key="4">
    <source>
        <dbReference type="PROSITE-ProRule" id="PRU00968"/>
    </source>
</evidence>
<name>CYB_CYNLU</name>
<proteinExistence type="inferred from homology"/>
<organism>
    <name type="scientific">Cynomys ludovicianus</name>
    <name type="common">Black-tailed prairie dog</name>
    <dbReference type="NCBI Taxonomy" id="45480"/>
    <lineage>
        <taxon>Eukaryota</taxon>
        <taxon>Metazoa</taxon>
        <taxon>Chordata</taxon>
        <taxon>Craniata</taxon>
        <taxon>Vertebrata</taxon>
        <taxon>Euteleostomi</taxon>
        <taxon>Mammalia</taxon>
        <taxon>Eutheria</taxon>
        <taxon>Euarchontoglires</taxon>
        <taxon>Glires</taxon>
        <taxon>Rodentia</taxon>
        <taxon>Sciuromorpha</taxon>
        <taxon>Sciuridae</taxon>
        <taxon>Xerinae</taxon>
        <taxon>Marmotini</taxon>
        <taxon>Cynomys</taxon>
    </lineage>
</organism>